<keyword id="KW-0687">Ribonucleoprotein</keyword>
<keyword id="KW-0689">Ribosomal protein</keyword>
<keyword id="KW-0694">RNA-binding</keyword>
<keyword id="KW-0699">rRNA-binding</keyword>
<name>RS18_PORG3</name>
<protein>
    <recommendedName>
        <fullName evidence="1">Small ribosomal subunit protein bS18</fullName>
    </recommendedName>
    <alternativeName>
        <fullName evidence="2">30S ribosomal protein S18</fullName>
    </alternativeName>
</protein>
<reference key="1">
    <citation type="journal article" date="2008" name="DNA Res.">
        <title>Determination of the genome sequence of Porphyromonas gingivalis strain ATCC 33277 and genomic comparison with strain W83 revealed extensive genome rearrangements in P. gingivalis.</title>
        <authorList>
            <person name="Naito M."/>
            <person name="Hirakawa H."/>
            <person name="Yamashita A."/>
            <person name="Ohara N."/>
            <person name="Shoji M."/>
            <person name="Yukitake H."/>
            <person name="Nakayama K."/>
            <person name="Toh H."/>
            <person name="Yoshimura F."/>
            <person name="Kuhara S."/>
            <person name="Hattori M."/>
            <person name="Hayashi T."/>
            <person name="Nakayama K."/>
        </authorList>
    </citation>
    <scope>NUCLEOTIDE SEQUENCE [LARGE SCALE GENOMIC DNA]</scope>
    <source>
        <strain>ATCC 33277 / DSM 20709 / CIP 103683 / JCM 12257 / NCTC 11834 / 2561</strain>
    </source>
</reference>
<proteinExistence type="inferred from homology"/>
<accession>B2RIG4</accession>
<dbReference type="EMBL" id="AP009380">
    <property type="protein sequence ID" value="BAG33159.1"/>
    <property type="molecule type" value="Genomic_DNA"/>
</dbReference>
<dbReference type="RefSeq" id="WP_004585133.1">
    <property type="nucleotide sequence ID" value="NZ_CP025930.1"/>
</dbReference>
<dbReference type="SMR" id="B2RIG4"/>
<dbReference type="GeneID" id="57239194"/>
<dbReference type="KEGG" id="pgn:PGN_0640"/>
<dbReference type="eggNOG" id="COG0238">
    <property type="taxonomic scope" value="Bacteria"/>
</dbReference>
<dbReference type="HOGENOM" id="CLU_148710_2_0_10"/>
<dbReference type="OrthoDB" id="9812008at2"/>
<dbReference type="BioCyc" id="PGIN431947:G1G2V-703-MONOMER"/>
<dbReference type="Proteomes" id="UP000008842">
    <property type="component" value="Chromosome"/>
</dbReference>
<dbReference type="GO" id="GO:0022627">
    <property type="term" value="C:cytosolic small ribosomal subunit"/>
    <property type="evidence" value="ECO:0007669"/>
    <property type="project" value="TreeGrafter"/>
</dbReference>
<dbReference type="GO" id="GO:0070181">
    <property type="term" value="F:small ribosomal subunit rRNA binding"/>
    <property type="evidence" value="ECO:0007669"/>
    <property type="project" value="TreeGrafter"/>
</dbReference>
<dbReference type="GO" id="GO:0003735">
    <property type="term" value="F:structural constituent of ribosome"/>
    <property type="evidence" value="ECO:0007669"/>
    <property type="project" value="InterPro"/>
</dbReference>
<dbReference type="GO" id="GO:0006412">
    <property type="term" value="P:translation"/>
    <property type="evidence" value="ECO:0007669"/>
    <property type="project" value="UniProtKB-UniRule"/>
</dbReference>
<dbReference type="FunFam" id="4.10.640.10:FF:000004">
    <property type="entry name" value="30S ribosomal protein S18"/>
    <property type="match status" value="1"/>
</dbReference>
<dbReference type="Gene3D" id="4.10.640.10">
    <property type="entry name" value="Ribosomal protein S18"/>
    <property type="match status" value="1"/>
</dbReference>
<dbReference type="HAMAP" id="MF_00270">
    <property type="entry name" value="Ribosomal_bS18"/>
    <property type="match status" value="1"/>
</dbReference>
<dbReference type="InterPro" id="IPR001648">
    <property type="entry name" value="Ribosomal_bS18"/>
</dbReference>
<dbReference type="InterPro" id="IPR018275">
    <property type="entry name" value="Ribosomal_bS18_CS"/>
</dbReference>
<dbReference type="InterPro" id="IPR036870">
    <property type="entry name" value="Ribosomal_bS18_sf"/>
</dbReference>
<dbReference type="NCBIfam" id="TIGR00165">
    <property type="entry name" value="S18"/>
    <property type="match status" value="1"/>
</dbReference>
<dbReference type="PANTHER" id="PTHR13479">
    <property type="entry name" value="30S RIBOSOMAL PROTEIN S18"/>
    <property type="match status" value="1"/>
</dbReference>
<dbReference type="PANTHER" id="PTHR13479:SF40">
    <property type="entry name" value="SMALL RIBOSOMAL SUBUNIT PROTEIN BS18M"/>
    <property type="match status" value="1"/>
</dbReference>
<dbReference type="Pfam" id="PF01084">
    <property type="entry name" value="Ribosomal_S18"/>
    <property type="match status" value="1"/>
</dbReference>
<dbReference type="PRINTS" id="PR00974">
    <property type="entry name" value="RIBOSOMALS18"/>
</dbReference>
<dbReference type="SUPFAM" id="SSF46911">
    <property type="entry name" value="Ribosomal protein S18"/>
    <property type="match status" value="1"/>
</dbReference>
<dbReference type="PROSITE" id="PS00057">
    <property type="entry name" value="RIBOSOMAL_S18"/>
    <property type="match status" value="1"/>
</dbReference>
<organism>
    <name type="scientific">Porphyromonas gingivalis (strain ATCC 33277 / DSM 20709 / CIP 103683 / JCM 12257 / NCTC 11834 / 2561)</name>
    <dbReference type="NCBI Taxonomy" id="431947"/>
    <lineage>
        <taxon>Bacteria</taxon>
        <taxon>Pseudomonadati</taxon>
        <taxon>Bacteroidota</taxon>
        <taxon>Bacteroidia</taxon>
        <taxon>Bacteroidales</taxon>
        <taxon>Porphyromonadaceae</taxon>
        <taxon>Porphyromonas</taxon>
    </lineage>
</organism>
<sequence length="90" mass="10622">MAANNQGEIRYLTPLSVDTKKKKYCRFKKSGIRYIDYKDPEFLKKFLNEQGKILPRRITGTSLKFQRRVAQAVKRARHLALLPYVTDMMK</sequence>
<gene>
    <name evidence="1" type="primary">rpsR</name>
    <name type="ordered locus">PGN_0640</name>
</gene>
<feature type="chain" id="PRO_1000114437" description="Small ribosomal subunit protein bS18">
    <location>
        <begin position="1"/>
        <end position="90"/>
    </location>
</feature>
<evidence type="ECO:0000255" key="1">
    <source>
        <dbReference type="HAMAP-Rule" id="MF_00270"/>
    </source>
</evidence>
<evidence type="ECO:0000305" key="2"/>
<comment type="function">
    <text evidence="1">Binds as a heterodimer with protein bS6 to the central domain of the 16S rRNA, where it helps stabilize the platform of the 30S subunit.</text>
</comment>
<comment type="subunit">
    <text evidence="1">Part of the 30S ribosomal subunit. Forms a tight heterodimer with protein bS6.</text>
</comment>
<comment type="similarity">
    <text evidence="1">Belongs to the bacterial ribosomal protein bS18 family.</text>
</comment>